<dbReference type="EC" id="2.8.1.7" evidence="1"/>
<dbReference type="EC" id="4.4.1.16" evidence="1"/>
<dbReference type="EMBL" id="AM933172">
    <property type="protein sequence ID" value="CAR33254.1"/>
    <property type="molecule type" value="Genomic_DNA"/>
</dbReference>
<dbReference type="RefSeq" id="WP_000143859.1">
    <property type="nucleotide sequence ID" value="NC_011294.1"/>
</dbReference>
<dbReference type="SMR" id="B5QVS9"/>
<dbReference type="KEGG" id="set:SEN1672"/>
<dbReference type="HOGENOM" id="CLU_003433_2_5_6"/>
<dbReference type="UniPathway" id="UPA00266"/>
<dbReference type="Proteomes" id="UP000000613">
    <property type="component" value="Chromosome"/>
</dbReference>
<dbReference type="GO" id="GO:0005737">
    <property type="term" value="C:cytoplasm"/>
    <property type="evidence" value="ECO:0007669"/>
    <property type="project" value="UniProtKB-SubCell"/>
</dbReference>
<dbReference type="GO" id="GO:0031071">
    <property type="term" value="F:cysteine desulfurase activity"/>
    <property type="evidence" value="ECO:0007669"/>
    <property type="project" value="UniProtKB-UniRule"/>
</dbReference>
<dbReference type="GO" id="GO:0030170">
    <property type="term" value="F:pyridoxal phosphate binding"/>
    <property type="evidence" value="ECO:0007669"/>
    <property type="project" value="InterPro"/>
</dbReference>
<dbReference type="GO" id="GO:0009000">
    <property type="term" value="F:selenocysteine lyase activity"/>
    <property type="evidence" value="ECO:0007669"/>
    <property type="project" value="UniProtKB-UniRule"/>
</dbReference>
<dbReference type="GO" id="GO:0006534">
    <property type="term" value="P:cysteine metabolic process"/>
    <property type="evidence" value="ECO:0007669"/>
    <property type="project" value="InterPro"/>
</dbReference>
<dbReference type="CDD" id="cd06453">
    <property type="entry name" value="SufS_like"/>
    <property type="match status" value="1"/>
</dbReference>
<dbReference type="FunFam" id="3.40.640.10:FF:000042">
    <property type="entry name" value="Cysteine desulfurase"/>
    <property type="match status" value="1"/>
</dbReference>
<dbReference type="Gene3D" id="3.90.1150.10">
    <property type="entry name" value="Aspartate Aminotransferase, domain 1"/>
    <property type="match status" value="1"/>
</dbReference>
<dbReference type="Gene3D" id="3.40.640.10">
    <property type="entry name" value="Type I PLP-dependent aspartate aminotransferase-like (Major domain)"/>
    <property type="match status" value="1"/>
</dbReference>
<dbReference type="HAMAP" id="MF_01831">
    <property type="entry name" value="SufS_aminotrans_5"/>
    <property type="match status" value="1"/>
</dbReference>
<dbReference type="InterPro" id="IPR000192">
    <property type="entry name" value="Aminotrans_V_dom"/>
</dbReference>
<dbReference type="InterPro" id="IPR020578">
    <property type="entry name" value="Aminotrans_V_PyrdxlP_BS"/>
</dbReference>
<dbReference type="InterPro" id="IPR010970">
    <property type="entry name" value="Cys_dSase_SufS"/>
</dbReference>
<dbReference type="InterPro" id="IPR015424">
    <property type="entry name" value="PyrdxlP-dep_Trfase"/>
</dbReference>
<dbReference type="InterPro" id="IPR015421">
    <property type="entry name" value="PyrdxlP-dep_Trfase_major"/>
</dbReference>
<dbReference type="InterPro" id="IPR015422">
    <property type="entry name" value="PyrdxlP-dep_Trfase_small"/>
</dbReference>
<dbReference type="NCBIfam" id="NF006791">
    <property type="entry name" value="PRK09295.1"/>
    <property type="match status" value="1"/>
</dbReference>
<dbReference type="NCBIfam" id="TIGR01979">
    <property type="entry name" value="sufS"/>
    <property type="match status" value="1"/>
</dbReference>
<dbReference type="PANTHER" id="PTHR43586">
    <property type="entry name" value="CYSTEINE DESULFURASE"/>
    <property type="match status" value="1"/>
</dbReference>
<dbReference type="PANTHER" id="PTHR43586:SF25">
    <property type="entry name" value="CYSTEINE DESULFURASE"/>
    <property type="match status" value="1"/>
</dbReference>
<dbReference type="Pfam" id="PF00266">
    <property type="entry name" value="Aminotran_5"/>
    <property type="match status" value="1"/>
</dbReference>
<dbReference type="SUPFAM" id="SSF53383">
    <property type="entry name" value="PLP-dependent transferases"/>
    <property type="match status" value="1"/>
</dbReference>
<dbReference type="PROSITE" id="PS00595">
    <property type="entry name" value="AA_TRANSFER_CLASS_5"/>
    <property type="match status" value="1"/>
</dbReference>
<evidence type="ECO:0000255" key="1">
    <source>
        <dbReference type="HAMAP-Rule" id="MF_01831"/>
    </source>
</evidence>
<feature type="chain" id="PRO_1000188306" description="Cysteine desulfurase">
    <location>
        <begin position="1"/>
        <end position="406"/>
    </location>
</feature>
<feature type="active site" description="Cysteine persulfide intermediate" evidence="1">
    <location>
        <position position="364"/>
    </location>
</feature>
<feature type="modified residue" description="N6-(pyridoxal phosphate)lysine" evidence="1">
    <location>
        <position position="226"/>
    </location>
</feature>
<gene>
    <name evidence="1" type="primary">sufS</name>
    <name type="ordered locus">SEN1672</name>
</gene>
<name>SUFS_SALEP</name>
<organism>
    <name type="scientific">Salmonella enteritidis PT4 (strain P125109)</name>
    <dbReference type="NCBI Taxonomy" id="550537"/>
    <lineage>
        <taxon>Bacteria</taxon>
        <taxon>Pseudomonadati</taxon>
        <taxon>Pseudomonadota</taxon>
        <taxon>Gammaproteobacteria</taxon>
        <taxon>Enterobacterales</taxon>
        <taxon>Enterobacteriaceae</taxon>
        <taxon>Salmonella</taxon>
    </lineage>
</organism>
<comment type="function">
    <text evidence="1">Cysteine desulfurases mobilize the sulfur from L-cysteine to yield L-alanine, an essential step in sulfur metabolism for biosynthesis of a variety of sulfur-containing biomolecules. Component of the suf operon, which is activated and required under specific conditions such as oxidative stress and iron limitation. Acts as a potent selenocysteine lyase in vitro, that mobilizes selenium from L-selenocysteine. Selenocysteine lyase activity is however unsure in vivo.</text>
</comment>
<comment type="catalytic activity">
    <reaction evidence="1">
        <text>(sulfur carrier)-H + L-cysteine = (sulfur carrier)-SH + L-alanine</text>
        <dbReference type="Rhea" id="RHEA:43892"/>
        <dbReference type="Rhea" id="RHEA-COMP:14737"/>
        <dbReference type="Rhea" id="RHEA-COMP:14739"/>
        <dbReference type="ChEBI" id="CHEBI:29917"/>
        <dbReference type="ChEBI" id="CHEBI:35235"/>
        <dbReference type="ChEBI" id="CHEBI:57972"/>
        <dbReference type="ChEBI" id="CHEBI:64428"/>
        <dbReference type="EC" id="2.8.1.7"/>
    </reaction>
</comment>
<comment type="catalytic activity">
    <reaction evidence="1">
        <text>L-selenocysteine + AH2 = hydrogenselenide + L-alanine + A + H(+)</text>
        <dbReference type="Rhea" id="RHEA:11632"/>
        <dbReference type="ChEBI" id="CHEBI:13193"/>
        <dbReference type="ChEBI" id="CHEBI:15378"/>
        <dbReference type="ChEBI" id="CHEBI:17499"/>
        <dbReference type="ChEBI" id="CHEBI:29317"/>
        <dbReference type="ChEBI" id="CHEBI:57843"/>
        <dbReference type="ChEBI" id="CHEBI:57972"/>
        <dbReference type="EC" id="4.4.1.16"/>
    </reaction>
</comment>
<comment type="cofactor">
    <cofactor evidence="1">
        <name>pyridoxal 5'-phosphate</name>
        <dbReference type="ChEBI" id="CHEBI:597326"/>
    </cofactor>
</comment>
<comment type="pathway">
    <text evidence="1">Cofactor biosynthesis; iron-sulfur cluster biosynthesis.</text>
</comment>
<comment type="subunit">
    <text evidence="1">Homodimer. Interacts with SufE and the SufBCD complex composed of SufB, SufC and SufD. The interaction with SufE is required to mediate the direct transfer of the sulfur atom from the S-sulfanylcysteine.</text>
</comment>
<comment type="subcellular location">
    <subcellularLocation>
        <location evidence="1">Cytoplasm</location>
    </subcellularLocation>
</comment>
<comment type="similarity">
    <text evidence="1">Belongs to the class-V pyridoxal-phosphate-dependent aminotransferase family. Csd subfamily.</text>
</comment>
<proteinExistence type="inferred from homology"/>
<keyword id="KW-0963">Cytoplasm</keyword>
<keyword id="KW-0456">Lyase</keyword>
<keyword id="KW-0663">Pyridoxal phosphate</keyword>
<keyword id="KW-0808">Transferase</keyword>
<reference key="1">
    <citation type="journal article" date="2008" name="Genome Res.">
        <title>Comparative genome analysis of Salmonella enteritidis PT4 and Salmonella gallinarum 287/91 provides insights into evolutionary and host adaptation pathways.</title>
        <authorList>
            <person name="Thomson N.R."/>
            <person name="Clayton D.J."/>
            <person name="Windhorst D."/>
            <person name="Vernikos G."/>
            <person name="Davidson S."/>
            <person name="Churcher C."/>
            <person name="Quail M.A."/>
            <person name="Stevens M."/>
            <person name="Jones M.A."/>
            <person name="Watson M."/>
            <person name="Barron A."/>
            <person name="Layton A."/>
            <person name="Pickard D."/>
            <person name="Kingsley R.A."/>
            <person name="Bignell A."/>
            <person name="Clark L."/>
            <person name="Harris B."/>
            <person name="Ormond D."/>
            <person name="Abdellah Z."/>
            <person name="Brooks K."/>
            <person name="Cherevach I."/>
            <person name="Chillingworth T."/>
            <person name="Woodward J."/>
            <person name="Norberczak H."/>
            <person name="Lord A."/>
            <person name="Arrowsmith C."/>
            <person name="Jagels K."/>
            <person name="Moule S."/>
            <person name="Mungall K."/>
            <person name="Saunders M."/>
            <person name="Whitehead S."/>
            <person name="Chabalgoity J.A."/>
            <person name="Maskell D."/>
            <person name="Humphreys T."/>
            <person name="Roberts M."/>
            <person name="Barrow P.A."/>
            <person name="Dougan G."/>
            <person name="Parkhill J."/>
        </authorList>
    </citation>
    <scope>NUCLEOTIDE SEQUENCE [LARGE SCALE GENOMIC DNA]</scope>
    <source>
        <strain>P125109</strain>
    </source>
</reference>
<accession>B5QVS9</accession>
<sequence length="406" mass="44504">MTFPVEKVRADFPILQREVNGLPLAYLDSAASAQKPNQVIDAESAFYRHGYAAVHRGIHTLSAQATESMENVRKQASRFINARSAEELVFVRGTTEGINLVANSWGTENIRAGDNIIISEMEHHANIVPWQMLCERKGAELRVIPLHPDGTLRLETLAALFDDRTRLLAITHVSNVLGTENPLPDMIALARQHGAKVLVDGAQAVMHHAVDVQALDCDFYVFSGHKLYGPTGIGILYVKEALLQEMPPWEGGGSMISTVSLTQGTTWAKAPWRFEAGTPNTGGIIGLGAAIDYVTSLGLDKIGDYEQMLMRYALEQLAQVPDITLYGPAQRLGVIAFNLGKHHAYDVGSFLDNYGIAVRTGHHCAMPLMAWYGVPAMCRASLAMYNTHEEVDRLVAGLTRIHRLLG</sequence>
<protein>
    <recommendedName>
        <fullName evidence="1">Cysteine desulfurase</fullName>
        <ecNumber evidence="1">2.8.1.7</ecNumber>
    </recommendedName>
    <alternativeName>
        <fullName evidence="1">Selenocysteine beta-lyase</fullName>
        <shortName evidence="1">SCL</shortName>
    </alternativeName>
    <alternativeName>
        <fullName evidence="1">Selenocysteine lyase</fullName>
        <ecNumber evidence="1">4.4.1.16</ecNumber>
    </alternativeName>
    <alternativeName>
        <fullName evidence="1">Selenocysteine reductase</fullName>
    </alternativeName>
</protein>